<keyword id="KW-0067">ATP-binding</keyword>
<keyword id="KW-0963">Cytoplasm</keyword>
<keyword id="KW-0324">Glycolysis</keyword>
<keyword id="KW-0418">Kinase</keyword>
<keyword id="KW-0547">Nucleotide-binding</keyword>
<keyword id="KW-0808">Transferase</keyword>
<evidence type="ECO:0000255" key="1">
    <source>
        <dbReference type="HAMAP-Rule" id="MF_00145"/>
    </source>
</evidence>
<sequence length="396" mass="41298">MPFRTLDTADLAGKRALVRVDFNVPVDGGKITDDTRLRAALPTIRYLSSKGAKVVLLAHFDRPKGKVVPEMSLAFVAEPLSKLLEQPVAFAADCVGPQARAVVDALENGGVALFENVRFHAGEEKNDADFAAQLAENGDLYVNDAFSAAHRAHASTEALARILPSYPGLAMQRELDALDAALGNPKKPVLGIVGGSKVSTKLDLLRNLVTKLDYLAIGGGMANTFLHAAKIDVGASLCEADMADTALQIIDLAAAAGCKLLLPTDVVVAHEVKPGVAAYTRNVYEVQPEDRILDAGPDTVATLLAAMDASQTLIWNGPLGVFEVPPFDEATVSAAKHAAKLAKSGKIVAVAGGGDTVAALNHAGVSGDFTFVSTAGGAFLEWMEGKTLPGVSALEV</sequence>
<feature type="chain" id="PRO_1000192814" description="Phosphoglycerate kinase">
    <location>
        <begin position="1"/>
        <end position="396"/>
    </location>
</feature>
<feature type="binding site" evidence="1">
    <location>
        <begin position="21"/>
        <end position="23"/>
    </location>
    <ligand>
        <name>substrate</name>
    </ligand>
</feature>
<feature type="binding site" evidence="1">
    <location>
        <position position="36"/>
    </location>
    <ligand>
        <name>substrate</name>
    </ligand>
</feature>
<feature type="binding site" evidence="1">
    <location>
        <begin position="59"/>
        <end position="62"/>
    </location>
    <ligand>
        <name>substrate</name>
    </ligand>
</feature>
<feature type="binding site" evidence="1">
    <location>
        <position position="118"/>
    </location>
    <ligand>
        <name>substrate</name>
    </ligand>
</feature>
<feature type="binding site" evidence="1">
    <location>
        <position position="151"/>
    </location>
    <ligand>
        <name>substrate</name>
    </ligand>
</feature>
<feature type="binding site" evidence="1">
    <location>
        <position position="201"/>
    </location>
    <ligand>
        <name>ATP</name>
        <dbReference type="ChEBI" id="CHEBI:30616"/>
    </ligand>
</feature>
<feature type="binding site" evidence="1">
    <location>
        <position position="323"/>
    </location>
    <ligand>
        <name>ATP</name>
        <dbReference type="ChEBI" id="CHEBI:30616"/>
    </ligand>
</feature>
<feature type="binding site" evidence="1">
    <location>
        <begin position="353"/>
        <end position="356"/>
    </location>
    <ligand>
        <name>ATP</name>
        <dbReference type="ChEBI" id="CHEBI:30616"/>
    </ligand>
</feature>
<comment type="catalytic activity">
    <reaction evidence="1">
        <text>(2R)-3-phosphoglycerate + ATP = (2R)-3-phospho-glyceroyl phosphate + ADP</text>
        <dbReference type="Rhea" id="RHEA:14801"/>
        <dbReference type="ChEBI" id="CHEBI:30616"/>
        <dbReference type="ChEBI" id="CHEBI:57604"/>
        <dbReference type="ChEBI" id="CHEBI:58272"/>
        <dbReference type="ChEBI" id="CHEBI:456216"/>
        <dbReference type="EC" id="2.7.2.3"/>
    </reaction>
</comment>
<comment type="pathway">
    <text evidence="1">Carbohydrate degradation; glycolysis; pyruvate from D-glyceraldehyde 3-phosphate: step 2/5.</text>
</comment>
<comment type="subunit">
    <text evidence="1">Monomer.</text>
</comment>
<comment type="subcellular location">
    <subcellularLocation>
        <location evidence="1">Cytoplasm</location>
    </subcellularLocation>
</comment>
<comment type="similarity">
    <text evidence="1">Belongs to the phosphoglycerate kinase family.</text>
</comment>
<proteinExistence type="inferred from homology"/>
<dbReference type="EC" id="2.7.2.3" evidence="1"/>
<dbReference type="EMBL" id="CP000927">
    <property type="protein sequence ID" value="ABZ69897.1"/>
    <property type="molecule type" value="Genomic_DNA"/>
</dbReference>
<dbReference type="SMR" id="B0SUL9"/>
<dbReference type="STRING" id="366602.Caul_0766"/>
<dbReference type="KEGG" id="cak:Caul_0766"/>
<dbReference type="eggNOG" id="COG0126">
    <property type="taxonomic scope" value="Bacteria"/>
</dbReference>
<dbReference type="HOGENOM" id="CLU_025427_0_2_5"/>
<dbReference type="OrthoDB" id="9808460at2"/>
<dbReference type="UniPathway" id="UPA00109">
    <property type="reaction ID" value="UER00185"/>
</dbReference>
<dbReference type="GO" id="GO:0005829">
    <property type="term" value="C:cytosol"/>
    <property type="evidence" value="ECO:0007669"/>
    <property type="project" value="TreeGrafter"/>
</dbReference>
<dbReference type="GO" id="GO:0043531">
    <property type="term" value="F:ADP binding"/>
    <property type="evidence" value="ECO:0007669"/>
    <property type="project" value="TreeGrafter"/>
</dbReference>
<dbReference type="GO" id="GO:0005524">
    <property type="term" value="F:ATP binding"/>
    <property type="evidence" value="ECO:0007669"/>
    <property type="project" value="UniProtKB-KW"/>
</dbReference>
<dbReference type="GO" id="GO:0004618">
    <property type="term" value="F:phosphoglycerate kinase activity"/>
    <property type="evidence" value="ECO:0007669"/>
    <property type="project" value="UniProtKB-UniRule"/>
</dbReference>
<dbReference type="GO" id="GO:0006094">
    <property type="term" value="P:gluconeogenesis"/>
    <property type="evidence" value="ECO:0007669"/>
    <property type="project" value="TreeGrafter"/>
</dbReference>
<dbReference type="GO" id="GO:0006096">
    <property type="term" value="P:glycolytic process"/>
    <property type="evidence" value="ECO:0007669"/>
    <property type="project" value="UniProtKB-UniRule"/>
</dbReference>
<dbReference type="FunFam" id="3.40.50.1260:FF:000006">
    <property type="entry name" value="Phosphoglycerate kinase"/>
    <property type="match status" value="1"/>
</dbReference>
<dbReference type="FunFam" id="3.40.50.1260:FF:000031">
    <property type="entry name" value="Phosphoglycerate kinase 1"/>
    <property type="match status" value="1"/>
</dbReference>
<dbReference type="Gene3D" id="3.40.50.1260">
    <property type="entry name" value="Phosphoglycerate kinase, N-terminal domain"/>
    <property type="match status" value="2"/>
</dbReference>
<dbReference type="HAMAP" id="MF_00145">
    <property type="entry name" value="Phosphoglyc_kinase"/>
    <property type="match status" value="1"/>
</dbReference>
<dbReference type="InterPro" id="IPR001576">
    <property type="entry name" value="Phosphoglycerate_kinase"/>
</dbReference>
<dbReference type="InterPro" id="IPR015824">
    <property type="entry name" value="Phosphoglycerate_kinase_N"/>
</dbReference>
<dbReference type="InterPro" id="IPR036043">
    <property type="entry name" value="Phosphoglycerate_kinase_sf"/>
</dbReference>
<dbReference type="PANTHER" id="PTHR11406">
    <property type="entry name" value="PHOSPHOGLYCERATE KINASE"/>
    <property type="match status" value="1"/>
</dbReference>
<dbReference type="PANTHER" id="PTHR11406:SF23">
    <property type="entry name" value="PHOSPHOGLYCERATE KINASE 1, CHLOROPLASTIC-RELATED"/>
    <property type="match status" value="1"/>
</dbReference>
<dbReference type="Pfam" id="PF00162">
    <property type="entry name" value="PGK"/>
    <property type="match status" value="1"/>
</dbReference>
<dbReference type="PIRSF" id="PIRSF000724">
    <property type="entry name" value="Pgk"/>
    <property type="match status" value="1"/>
</dbReference>
<dbReference type="PRINTS" id="PR00477">
    <property type="entry name" value="PHGLYCKINASE"/>
</dbReference>
<dbReference type="SUPFAM" id="SSF53748">
    <property type="entry name" value="Phosphoglycerate kinase"/>
    <property type="match status" value="1"/>
</dbReference>
<protein>
    <recommendedName>
        <fullName evidence="1">Phosphoglycerate kinase</fullName>
        <ecNumber evidence="1">2.7.2.3</ecNumber>
    </recommendedName>
</protein>
<name>PGK_CAUSK</name>
<reference key="1">
    <citation type="submission" date="2008-01" db="EMBL/GenBank/DDBJ databases">
        <title>Complete sequence of chromosome of Caulobacter sp. K31.</title>
        <authorList>
            <consortium name="US DOE Joint Genome Institute"/>
            <person name="Copeland A."/>
            <person name="Lucas S."/>
            <person name="Lapidus A."/>
            <person name="Barry K."/>
            <person name="Glavina del Rio T."/>
            <person name="Dalin E."/>
            <person name="Tice H."/>
            <person name="Pitluck S."/>
            <person name="Bruce D."/>
            <person name="Goodwin L."/>
            <person name="Thompson L.S."/>
            <person name="Brettin T."/>
            <person name="Detter J.C."/>
            <person name="Han C."/>
            <person name="Schmutz J."/>
            <person name="Larimer F."/>
            <person name="Land M."/>
            <person name="Hauser L."/>
            <person name="Kyrpides N."/>
            <person name="Kim E."/>
            <person name="Stephens C."/>
            <person name="Richardson P."/>
        </authorList>
    </citation>
    <scope>NUCLEOTIDE SEQUENCE [LARGE SCALE GENOMIC DNA]</scope>
    <source>
        <strain>K31</strain>
    </source>
</reference>
<organism>
    <name type="scientific">Caulobacter sp. (strain K31)</name>
    <dbReference type="NCBI Taxonomy" id="366602"/>
    <lineage>
        <taxon>Bacteria</taxon>
        <taxon>Pseudomonadati</taxon>
        <taxon>Pseudomonadota</taxon>
        <taxon>Alphaproteobacteria</taxon>
        <taxon>Caulobacterales</taxon>
        <taxon>Caulobacteraceae</taxon>
        <taxon>Caulobacter</taxon>
    </lineage>
</organism>
<accession>B0SUL9</accession>
<gene>
    <name evidence="1" type="primary">pgk</name>
    <name type="ordered locus">Caul_0766</name>
</gene>